<dbReference type="EMBL" id="CP017625">
    <property type="status" value="NOT_ANNOTATED_CDS"/>
    <property type="molecule type" value="Genomic_DNA"/>
</dbReference>
<dbReference type="PDB" id="7PZY">
    <property type="method" value="EM"/>
    <property type="resolution" value="2.32 A"/>
    <property type="chains" value="AO=1-25"/>
</dbReference>
<dbReference type="PDB" id="7Q0F">
    <property type="method" value="EM"/>
    <property type="resolution" value="2.64 A"/>
    <property type="chains" value="AO=1-25"/>
</dbReference>
<dbReference type="PDB" id="7Q0P">
    <property type="method" value="EM"/>
    <property type="resolution" value="2.77 A"/>
    <property type="chains" value="AO=1-25"/>
</dbReference>
<dbReference type="PDB" id="8C3A">
    <property type="method" value="X-ray"/>
    <property type="resolution" value="3.00 A"/>
    <property type="chains" value="AO/CI=1-25"/>
</dbReference>
<dbReference type="PDB" id="8CQ7">
    <property type="method" value="X-ray"/>
    <property type="resolution" value="3.20 A"/>
    <property type="chains" value="AO/CI=1-25"/>
</dbReference>
<dbReference type="PDB" id="8CQW">
    <property type="method" value="X-ray"/>
    <property type="resolution" value="3.05 A"/>
    <property type="chains" value="AO/CI=1-25"/>
</dbReference>
<dbReference type="PDB" id="8CRE">
    <property type="method" value="X-ray"/>
    <property type="resolution" value="3.00 A"/>
    <property type="chains" value="AO/CI=1-25"/>
</dbReference>
<dbReference type="PDB" id="8OEQ">
    <property type="method" value="X-ray"/>
    <property type="resolution" value="3.30 A"/>
    <property type="chains" value="AO/CI=1-25"/>
</dbReference>
<dbReference type="PDB" id="8OGJ">
    <property type="method" value="EM"/>
    <property type="resolution" value="3.10 A"/>
    <property type="chains" value="AO=1-25"/>
</dbReference>
<dbReference type="PDB" id="8OH6">
    <property type="method" value="X-ray"/>
    <property type="resolution" value="3.35 A"/>
    <property type="chains" value="AO/CI=1-25"/>
</dbReference>
<dbReference type="PDB" id="8OI5">
    <property type="method" value="X-ray"/>
    <property type="resolution" value="2.90 A"/>
    <property type="chains" value="AO/CI=1-25"/>
</dbReference>
<dbReference type="PDB" id="8OJ3">
    <property type="method" value="X-ray"/>
    <property type="resolution" value="3.50 A"/>
    <property type="chains" value="AO/CI=1-25"/>
</dbReference>
<dbReference type="PDB" id="8Q5I">
    <property type="method" value="EM"/>
    <property type="resolution" value="2.45 A"/>
    <property type="chains" value="AO=1-25"/>
</dbReference>
<dbReference type="PDBsum" id="7PZY"/>
<dbReference type="PDBsum" id="7Q0F"/>
<dbReference type="PDBsum" id="7Q0P"/>
<dbReference type="PDBsum" id="8C3A"/>
<dbReference type="PDBsum" id="8CQ7"/>
<dbReference type="PDBsum" id="8CQW"/>
<dbReference type="PDBsum" id="8CRE"/>
<dbReference type="PDBsum" id="8OEQ"/>
<dbReference type="PDBsum" id="8OGJ"/>
<dbReference type="PDBsum" id="8OH6"/>
<dbReference type="PDBsum" id="8OI5"/>
<dbReference type="PDBsum" id="8OJ3"/>
<dbReference type="PDBsum" id="8Q5I"/>
<dbReference type="EMDB" id="EMD-13737"/>
<dbReference type="EMDB" id="EMD-13744"/>
<dbReference type="EMDB" id="EMD-13749"/>
<dbReference type="EMDB" id="EMD-16874"/>
<dbReference type="SMR" id="P9WER7"/>
<dbReference type="Proteomes" id="UP000000559">
    <property type="component" value="Chromosome 3"/>
</dbReference>
<dbReference type="GO" id="GO:0005737">
    <property type="term" value="C:cytoplasm"/>
    <property type="evidence" value="ECO:0007669"/>
    <property type="project" value="UniProtKB-SubCell"/>
</dbReference>
<dbReference type="GO" id="GO:1990904">
    <property type="term" value="C:ribonucleoprotein complex"/>
    <property type="evidence" value="ECO:0007669"/>
    <property type="project" value="UniProtKB-KW"/>
</dbReference>
<dbReference type="GO" id="GO:0005840">
    <property type="term" value="C:ribosome"/>
    <property type="evidence" value="ECO:0007669"/>
    <property type="project" value="UniProtKB-KW"/>
</dbReference>
<dbReference type="GO" id="GO:0003735">
    <property type="term" value="F:structural constituent of ribosome"/>
    <property type="evidence" value="ECO:0007669"/>
    <property type="project" value="InterPro"/>
</dbReference>
<dbReference type="GO" id="GO:0006412">
    <property type="term" value="P:translation"/>
    <property type="evidence" value="ECO:0007669"/>
    <property type="project" value="InterPro"/>
</dbReference>
<dbReference type="InterPro" id="IPR007836">
    <property type="entry name" value="Ribosomal_eS32"/>
</dbReference>
<dbReference type="Pfam" id="PF05162">
    <property type="entry name" value="Ribosomal_L41"/>
    <property type="match status" value="1"/>
</dbReference>
<organism>
    <name type="scientific">Candida albicans (strain SC5314 / ATCC MYA-2876)</name>
    <name type="common">Yeast</name>
    <dbReference type="NCBI Taxonomy" id="237561"/>
    <lineage>
        <taxon>Eukaryota</taxon>
        <taxon>Fungi</taxon>
        <taxon>Dikarya</taxon>
        <taxon>Ascomycota</taxon>
        <taxon>Saccharomycotina</taxon>
        <taxon>Pichiomycetes</taxon>
        <taxon>Debaryomycetaceae</taxon>
        <taxon>Candida/Lodderomyces clade</taxon>
        <taxon>Candida</taxon>
    </lineage>
</organism>
<keyword id="KW-0002">3D-structure</keyword>
<keyword id="KW-0963">Cytoplasm</keyword>
<keyword id="KW-1185">Reference proteome</keyword>
<keyword id="KW-0687">Ribonucleoprotein</keyword>
<keyword id="KW-0689">Ribosomal protein</keyword>
<evidence type="ECO:0000256" key="1">
    <source>
        <dbReference type="SAM" id="MobiDB-lite"/>
    </source>
</evidence>
<evidence type="ECO:0000269" key="2">
    <source>
    </source>
</evidence>
<evidence type="ECO:0000303" key="3">
    <source>
    </source>
</evidence>
<evidence type="ECO:0000305" key="4"/>
<evidence type="ECO:0000305" key="5">
    <source>
    </source>
</evidence>
<evidence type="ECO:0000305" key="6">
    <source ref="3"/>
</evidence>
<evidence type="ECO:0007744" key="7">
    <source>
        <dbReference type="PDB" id="7PZY"/>
    </source>
</evidence>
<evidence type="ECO:0007744" key="8">
    <source>
        <dbReference type="PDB" id="7Q0F"/>
    </source>
</evidence>
<evidence type="ECO:0007744" key="9">
    <source>
        <dbReference type="PDB" id="7Q0P"/>
    </source>
</evidence>
<gene>
    <name evidence="3" type="primary">RPL41</name>
</gene>
<feature type="chain" id="PRO_0000456499" description="Small ribosomal subunit protein eS32">
    <location>
        <begin position="1"/>
        <end position="25"/>
    </location>
</feature>
<feature type="region of interest" description="Disordered" evidence="1">
    <location>
        <begin position="1"/>
        <end position="25"/>
    </location>
</feature>
<reference key="1">
    <citation type="journal article" date="2004" name="Proc. Natl. Acad. Sci. U.S.A.">
        <title>The diploid genome sequence of Candida albicans.</title>
        <authorList>
            <person name="Jones T."/>
            <person name="Federspiel N.A."/>
            <person name="Chibana H."/>
            <person name="Dungan J."/>
            <person name="Kalman S."/>
            <person name="Magee B.B."/>
            <person name="Newport G."/>
            <person name="Thorstenson Y.R."/>
            <person name="Agabian N."/>
            <person name="Magee P.T."/>
            <person name="Davis R.W."/>
            <person name="Scherer S."/>
        </authorList>
    </citation>
    <scope>NUCLEOTIDE SEQUENCE [LARGE SCALE GENOMIC DNA]</scope>
    <source>
        <strain>SC5314 / ATCC MYA-2876</strain>
    </source>
</reference>
<reference key="2">
    <citation type="journal article" date="2007" name="Genome Biol.">
        <title>Assembly of the Candida albicans genome into sixteen supercontigs aligned on the eight chromosomes.</title>
        <authorList>
            <person name="van het Hoog M."/>
            <person name="Rast T.J."/>
            <person name="Martchenko M."/>
            <person name="Grindle S."/>
            <person name="Dignard D."/>
            <person name="Hogues H."/>
            <person name="Cuomo C."/>
            <person name="Berriman M."/>
            <person name="Scherer S."/>
            <person name="Magee B.B."/>
            <person name="Whiteway M."/>
            <person name="Chibana H."/>
            <person name="Nantel A."/>
            <person name="Magee P.T."/>
        </authorList>
    </citation>
    <scope>GENOME REANNOTATION</scope>
    <source>
        <strain>SC5314 / ATCC MYA-2876</strain>
    </source>
</reference>
<reference key="3">
    <citation type="unpublished observations" date="2023-10">
        <authorList>
            <person name="Leibundgut M.A."/>
            <person name="Ban N."/>
        </authorList>
    </citation>
    <scope>REVISION OF SUBUNIT</scope>
    <scope>NOMENCLATURE</scope>
</reference>
<reference evidence="7 8 9" key="4">
    <citation type="journal article" date="2022" name="Sci. Adv.">
        <title>E-site drug specificity of the human pathogen Candida albicans ribosome.</title>
        <authorList>
            <person name="Zgadzay Y."/>
            <person name="Kolosova O."/>
            <person name="Stetsenko A."/>
            <person name="Wu C."/>
            <person name="Bruchlen D."/>
            <person name="Usachev K."/>
            <person name="Validov S."/>
            <person name="Jenner L."/>
            <person name="Rogachev A."/>
            <person name="Yusupova G."/>
            <person name="Sachs M.S."/>
            <person name="Guskov A."/>
            <person name="Yusupov M."/>
        </authorList>
    </citation>
    <scope>STRUCTURE BY ELECTRON MICROSCOPY (2.32 ANGSTROMS) OF THE 80S RIBOSOME</scope>
    <scope>SUBUNIT</scope>
</reference>
<protein>
    <recommendedName>
        <fullName evidence="6">Small ribosomal subunit protein eS32</fullName>
    </recommendedName>
    <alternativeName>
        <fullName>60S ribosomal protein L41</fullName>
    </alternativeName>
    <alternativeName>
        <fullName evidence="3">Large ribosomal subunit protein eL41</fullName>
    </alternativeName>
</protein>
<sequence>MRDKWRKKRVRRLKRKRRKVRARSK</sequence>
<proteinExistence type="evidence at protein level"/>
<accession>P9WER7</accession>
<name>RS32_CANAL</name>
<comment type="function">
    <text evidence="5">Component of the ribosome, a large ribonucleoprotein complex responsible for the synthesis of proteins in the cell. The small ribosomal subunit (SSU) binds messenger RNAs (mRNAs) and translates the encoded message by selecting cognate aminoacyl-transfer RNA (tRNA) molecules. The large subunit (LSU) contains the ribosomal catalytic site termed the peptidyl transferase center (PTC), which catalyzes the formation of peptide bonds, thereby polymerizing the amino acids delivered by tRNAs into a polypeptide chain. The nascent polypeptides leave the ribosome through a tunnel in the LSU and interact with protein factors that function in enzymatic processing, targeting, and the membrane insertion of nascent chains at the exit of the ribosomal tunnel.</text>
</comment>
<comment type="subunit">
    <text evidence="2 6">Component of the small ribosomal subunit (Probable) (Ref.3). Mature ribosomes consist of a small (40S) and a large (60S) subunit (PubMed:35613268). The 40S subunit contains about 32 different proteins and 1 molecule of RNA (18S) (PubMed:35613268). The 60S subunit contains 45 different proteins and 3 molecules of RNA (25S, 5.8S and 5S) (PubMed:35613268).</text>
</comment>
<comment type="subcellular location">
    <subcellularLocation>
        <location evidence="5">Cytoplasm</location>
    </subcellularLocation>
</comment>
<comment type="miscellaneous">
    <text evidence="6">Initially thought to be part of the large ribosomal subunit. Crystal structures show eS32/eL41 to be a small ribosomal subunit forming a bridge at the interface of the 2 subunits.</text>
</comment>
<comment type="similarity">
    <text evidence="4">Belongs to the eukaryotic ribosomal protein eS32 family.</text>
</comment>